<reference key="1">
    <citation type="journal article" date="2010" name="Plant Cell">
        <title>Cell Number Regulator1 affects plant and organ size in maize: implications for crop yield enhancement and heterosis.</title>
        <authorList>
            <person name="Guo M."/>
            <person name="Rupe M.A."/>
            <person name="Dieter J.A."/>
            <person name="Zou J."/>
            <person name="Spielbauer D."/>
            <person name="Duncan K.E."/>
            <person name="Howard R.J."/>
            <person name="Hou Z."/>
            <person name="Simmons C.R."/>
        </authorList>
    </citation>
    <scope>NUCLEOTIDE SEQUENCE [MRNA]</scope>
    <scope>FUNCTION</scope>
    <scope>TISSUE SPECIFICITY</scope>
    <scope>GENE FAMILY</scope>
    <scope>NOMENCLATURE</scope>
    <source>
        <strain>cv. B73</strain>
    </source>
</reference>
<reference key="2">
    <citation type="submission" date="2008-07" db="EMBL/GenBank/DDBJ databases">
        <title>Maize full-length cDNA project.</title>
        <authorList>
            <person name="Yu Y."/>
            <person name="Currie J."/>
            <person name="Lomeli R."/>
            <person name="Angelova A."/>
            <person name="Collura K."/>
            <person name="Wissotski M."/>
            <person name="Campos D."/>
            <person name="Kudrna D."/>
            <person name="Golser W."/>
            <person name="Ashely E."/>
            <person name="Haller K."/>
            <person name="Descour A."/>
            <person name="Fernandes J."/>
            <person name="Zuccolo A."/>
            <person name="Soderlund C."/>
            <person name="Walbot V."/>
        </authorList>
    </citation>
    <scope>NUCLEOTIDE SEQUENCE [LARGE SCALE MRNA]</scope>
    <source>
        <strain>cv. B73</strain>
    </source>
</reference>
<reference key="3">
    <citation type="journal article" date="2009" name="Plant Mol. Biol.">
        <title>Insights into corn genes derived from large-scale cDNA sequencing.</title>
        <authorList>
            <person name="Alexandrov N.N."/>
            <person name="Brover V.V."/>
            <person name="Freidin S."/>
            <person name="Troukhan M.E."/>
            <person name="Tatarinova T.V."/>
            <person name="Zhang H."/>
            <person name="Swaller T.J."/>
            <person name="Lu Y.-P."/>
            <person name="Bouck J."/>
            <person name="Flavell R.B."/>
            <person name="Feldmann K.A."/>
        </authorList>
    </citation>
    <scope>NUCLEOTIDE SEQUENCE [LARGE SCALE MRNA]</scope>
</reference>
<name>CNR1_MAIZE</name>
<sequence>MYPSAPPDAYNKFSAGAPPTAPPPPAAYHQQQQQHGANMDTSRPGGGLRKWSTGLFHCMDDPGNCLITCLCPCVTFGQVADIVDKGTCPCIASGLVYGLICASTGMGCLYSCLYRSKLRAEYDLDEGECPDILVHCCCEHLALCQEYRELKNRGFDLGIGWEANMDRQRRGVAGGGAVMGAPPAIPLGMIR</sequence>
<evidence type="ECO:0000255" key="1"/>
<evidence type="ECO:0000256" key="2">
    <source>
        <dbReference type="SAM" id="MobiDB-lite"/>
    </source>
</evidence>
<evidence type="ECO:0000269" key="3">
    <source>
    </source>
</evidence>
<evidence type="ECO:0000305" key="4"/>
<accession>B6TZ45</accession>
<accession>B4FTQ5</accession>
<organism>
    <name type="scientific">Zea mays</name>
    <name type="common">Maize</name>
    <dbReference type="NCBI Taxonomy" id="4577"/>
    <lineage>
        <taxon>Eukaryota</taxon>
        <taxon>Viridiplantae</taxon>
        <taxon>Streptophyta</taxon>
        <taxon>Embryophyta</taxon>
        <taxon>Tracheophyta</taxon>
        <taxon>Spermatophyta</taxon>
        <taxon>Magnoliopsida</taxon>
        <taxon>Liliopsida</taxon>
        <taxon>Poales</taxon>
        <taxon>Poaceae</taxon>
        <taxon>PACMAD clade</taxon>
        <taxon>Panicoideae</taxon>
        <taxon>Andropogonodae</taxon>
        <taxon>Andropogoneae</taxon>
        <taxon>Tripsacinae</taxon>
        <taxon>Zea</taxon>
    </lineage>
</organism>
<feature type="chain" id="PRO_0000407729" description="Cell number regulator 1">
    <location>
        <begin position="1"/>
        <end position="191"/>
    </location>
</feature>
<feature type="transmembrane region" description="Helical" evidence="1">
    <location>
        <begin position="91"/>
        <end position="113"/>
    </location>
</feature>
<feature type="region of interest" description="Disordered" evidence="2">
    <location>
        <begin position="13"/>
        <end position="44"/>
    </location>
</feature>
<feature type="compositionally biased region" description="Low complexity" evidence="2">
    <location>
        <begin position="27"/>
        <end position="37"/>
    </location>
</feature>
<feature type="sequence conflict" description="In Ref. 2; ACF85498." evidence="4" ref="2">
    <location>
        <begin position="29"/>
        <end position="30"/>
    </location>
</feature>
<dbReference type="EMBL" id="HM008653">
    <property type="protein sequence ID" value="ADI48415.1"/>
    <property type="molecule type" value="mRNA"/>
</dbReference>
<dbReference type="EMBL" id="BT040493">
    <property type="protein sequence ID" value="ACF85498.1"/>
    <property type="molecule type" value="mRNA"/>
</dbReference>
<dbReference type="EMBL" id="EU970260">
    <property type="protein sequence ID" value="ACG42378.1"/>
    <property type="molecule type" value="mRNA"/>
</dbReference>
<dbReference type="RefSeq" id="NP_001151323.1">
    <property type="nucleotide sequence ID" value="NM_001157851.1"/>
</dbReference>
<dbReference type="FunCoup" id="B6TZ45">
    <property type="interactions" value="9"/>
</dbReference>
<dbReference type="STRING" id="4577.B6TZ45"/>
<dbReference type="PaxDb" id="4577-GRMZM2G015941_P01"/>
<dbReference type="eggNOG" id="ENOG502RZ8E">
    <property type="taxonomic scope" value="Eukaryota"/>
</dbReference>
<dbReference type="InParanoid" id="B6TZ45"/>
<dbReference type="Proteomes" id="UP000007305">
    <property type="component" value="Unplaced"/>
</dbReference>
<dbReference type="ExpressionAtlas" id="B6TZ45">
    <property type="expression patterns" value="baseline and differential"/>
</dbReference>
<dbReference type="GO" id="GO:0016020">
    <property type="term" value="C:membrane"/>
    <property type="evidence" value="ECO:0007669"/>
    <property type="project" value="UniProtKB-SubCell"/>
</dbReference>
<dbReference type="GO" id="GO:0008285">
    <property type="term" value="P:negative regulation of cell population proliferation"/>
    <property type="evidence" value="ECO:0000315"/>
    <property type="project" value="UniProtKB"/>
</dbReference>
<dbReference type="InterPro" id="IPR006461">
    <property type="entry name" value="PLAC_motif_containing"/>
</dbReference>
<dbReference type="NCBIfam" id="TIGR01571">
    <property type="entry name" value="A_thal_Cys_rich"/>
    <property type="match status" value="1"/>
</dbReference>
<dbReference type="PANTHER" id="PTHR15907">
    <property type="entry name" value="DUF614 FAMILY PROTEIN-RELATED"/>
    <property type="match status" value="1"/>
</dbReference>
<dbReference type="Pfam" id="PF04749">
    <property type="entry name" value="PLAC8"/>
    <property type="match status" value="1"/>
</dbReference>
<keyword id="KW-0472">Membrane</keyword>
<keyword id="KW-1185">Reference proteome</keyword>
<keyword id="KW-0812">Transmembrane</keyword>
<keyword id="KW-1133">Transmembrane helix</keyword>
<gene>
    <name type="primary">CNR1</name>
</gene>
<proteinExistence type="evidence at transcript level"/>
<comment type="function">
    <text evidence="3">Acts as a negative regulator of cell number.</text>
</comment>
<comment type="subcellular location">
    <subcellularLocation>
        <location evidence="4">Membrane</location>
        <topology evidence="4">Single-pass membrane protein</topology>
    </subcellularLocation>
</comment>
<comment type="tissue specificity">
    <text evidence="3">Expressed in roots, coleoptiles, stalks and silks. Detected in leaves, apical meristems, immature ears and pericarps. Highest expression in coleoptiles and silks.</text>
</comment>
<comment type="similarity">
    <text evidence="4">Belongs to the cornifelin family.</text>
</comment>
<protein>
    <recommendedName>
        <fullName>Cell number regulator 1</fullName>
    </recommendedName>
    <alternativeName>
        <fullName>ZmCNR01</fullName>
    </alternativeName>
</protein>